<proteinExistence type="inferred from homology"/>
<protein>
    <recommendedName>
        <fullName evidence="1">Elongation factor G 2</fullName>
        <shortName evidence="1">EF-G 2</shortName>
    </recommendedName>
</protein>
<reference key="1">
    <citation type="submission" date="2006-05" db="EMBL/GenBank/DDBJ databases">
        <title>Complete sequence of chromosome 1 of Burkholderia cenocepacia AU 1054.</title>
        <authorList>
            <consortium name="US DOE Joint Genome Institute"/>
            <person name="Copeland A."/>
            <person name="Lucas S."/>
            <person name="Lapidus A."/>
            <person name="Barry K."/>
            <person name="Detter J.C."/>
            <person name="Glavina del Rio T."/>
            <person name="Hammon N."/>
            <person name="Israni S."/>
            <person name="Dalin E."/>
            <person name="Tice H."/>
            <person name="Pitluck S."/>
            <person name="Chain P."/>
            <person name="Malfatti S."/>
            <person name="Shin M."/>
            <person name="Vergez L."/>
            <person name="Schmutz J."/>
            <person name="Larimer F."/>
            <person name="Land M."/>
            <person name="Hauser L."/>
            <person name="Kyrpides N."/>
            <person name="Lykidis A."/>
            <person name="LiPuma J.J."/>
            <person name="Konstantinidis K."/>
            <person name="Tiedje J.M."/>
            <person name="Richardson P."/>
        </authorList>
    </citation>
    <scope>NUCLEOTIDE SEQUENCE [LARGE SCALE GENOMIC DNA]</scope>
    <source>
        <strain>AU 1054</strain>
    </source>
</reference>
<dbReference type="EMBL" id="CP000378">
    <property type="protein sequence ID" value="ABF77660.1"/>
    <property type="molecule type" value="Genomic_DNA"/>
</dbReference>
<dbReference type="SMR" id="Q1BRU5"/>
<dbReference type="HOGENOM" id="CLU_002794_4_1_4"/>
<dbReference type="GO" id="GO:0005737">
    <property type="term" value="C:cytoplasm"/>
    <property type="evidence" value="ECO:0007669"/>
    <property type="project" value="UniProtKB-SubCell"/>
</dbReference>
<dbReference type="GO" id="GO:0005525">
    <property type="term" value="F:GTP binding"/>
    <property type="evidence" value="ECO:0007669"/>
    <property type="project" value="UniProtKB-UniRule"/>
</dbReference>
<dbReference type="GO" id="GO:0003924">
    <property type="term" value="F:GTPase activity"/>
    <property type="evidence" value="ECO:0007669"/>
    <property type="project" value="InterPro"/>
</dbReference>
<dbReference type="GO" id="GO:0097216">
    <property type="term" value="F:guanosine tetraphosphate binding"/>
    <property type="evidence" value="ECO:0007669"/>
    <property type="project" value="UniProtKB-ARBA"/>
</dbReference>
<dbReference type="GO" id="GO:0003746">
    <property type="term" value="F:translation elongation factor activity"/>
    <property type="evidence" value="ECO:0007669"/>
    <property type="project" value="UniProtKB-UniRule"/>
</dbReference>
<dbReference type="GO" id="GO:0032790">
    <property type="term" value="P:ribosome disassembly"/>
    <property type="evidence" value="ECO:0007669"/>
    <property type="project" value="TreeGrafter"/>
</dbReference>
<dbReference type="CDD" id="cd01886">
    <property type="entry name" value="EF-G"/>
    <property type="match status" value="1"/>
</dbReference>
<dbReference type="CDD" id="cd16262">
    <property type="entry name" value="EFG_III"/>
    <property type="match status" value="1"/>
</dbReference>
<dbReference type="CDD" id="cd01434">
    <property type="entry name" value="EFG_mtEFG1_IV"/>
    <property type="match status" value="1"/>
</dbReference>
<dbReference type="CDD" id="cd03713">
    <property type="entry name" value="EFG_mtEFG_C"/>
    <property type="match status" value="1"/>
</dbReference>
<dbReference type="CDD" id="cd04088">
    <property type="entry name" value="EFG_mtEFG_II"/>
    <property type="match status" value="1"/>
</dbReference>
<dbReference type="FunFam" id="2.40.30.10:FF:000006">
    <property type="entry name" value="Elongation factor G"/>
    <property type="match status" value="1"/>
</dbReference>
<dbReference type="FunFam" id="3.30.230.10:FF:000003">
    <property type="entry name" value="Elongation factor G"/>
    <property type="match status" value="1"/>
</dbReference>
<dbReference type="FunFam" id="3.30.70.240:FF:000001">
    <property type="entry name" value="Elongation factor G"/>
    <property type="match status" value="1"/>
</dbReference>
<dbReference type="FunFam" id="3.30.70.870:FF:000001">
    <property type="entry name" value="Elongation factor G"/>
    <property type="match status" value="1"/>
</dbReference>
<dbReference type="FunFam" id="3.40.50.300:FF:000029">
    <property type="entry name" value="Elongation factor G"/>
    <property type="match status" value="1"/>
</dbReference>
<dbReference type="Gene3D" id="3.30.230.10">
    <property type="match status" value="1"/>
</dbReference>
<dbReference type="Gene3D" id="3.30.70.240">
    <property type="match status" value="1"/>
</dbReference>
<dbReference type="Gene3D" id="3.30.70.870">
    <property type="entry name" value="Elongation Factor G (Translational Gtpase), domain 3"/>
    <property type="match status" value="1"/>
</dbReference>
<dbReference type="Gene3D" id="3.40.50.300">
    <property type="entry name" value="P-loop containing nucleotide triphosphate hydrolases"/>
    <property type="match status" value="1"/>
</dbReference>
<dbReference type="Gene3D" id="2.40.30.10">
    <property type="entry name" value="Translation factors"/>
    <property type="match status" value="1"/>
</dbReference>
<dbReference type="HAMAP" id="MF_00054_B">
    <property type="entry name" value="EF_G_EF_2_B"/>
    <property type="match status" value="1"/>
</dbReference>
<dbReference type="InterPro" id="IPR041095">
    <property type="entry name" value="EFG_II"/>
</dbReference>
<dbReference type="InterPro" id="IPR009022">
    <property type="entry name" value="EFG_III"/>
</dbReference>
<dbReference type="InterPro" id="IPR035647">
    <property type="entry name" value="EFG_III/V"/>
</dbReference>
<dbReference type="InterPro" id="IPR047872">
    <property type="entry name" value="EFG_IV"/>
</dbReference>
<dbReference type="InterPro" id="IPR035649">
    <property type="entry name" value="EFG_V"/>
</dbReference>
<dbReference type="InterPro" id="IPR000640">
    <property type="entry name" value="EFG_V-like"/>
</dbReference>
<dbReference type="InterPro" id="IPR004161">
    <property type="entry name" value="EFTu-like_2"/>
</dbReference>
<dbReference type="InterPro" id="IPR031157">
    <property type="entry name" value="G_TR_CS"/>
</dbReference>
<dbReference type="InterPro" id="IPR027417">
    <property type="entry name" value="P-loop_NTPase"/>
</dbReference>
<dbReference type="InterPro" id="IPR020568">
    <property type="entry name" value="Ribosomal_Su5_D2-typ_SF"/>
</dbReference>
<dbReference type="InterPro" id="IPR014721">
    <property type="entry name" value="Ribsml_uS5_D2-typ_fold_subgr"/>
</dbReference>
<dbReference type="InterPro" id="IPR005225">
    <property type="entry name" value="Small_GTP-bd"/>
</dbReference>
<dbReference type="InterPro" id="IPR000795">
    <property type="entry name" value="T_Tr_GTP-bd_dom"/>
</dbReference>
<dbReference type="InterPro" id="IPR009000">
    <property type="entry name" value="Transl_B-barrel_sf"/>
</dbReference>
<dbReference type="InterPro" id="IPR004540">
    <property type="entry name" value="Transl_elong_EFG/EF2"/>
</dbReference>
<dbReference type="InterPro" id="IPR005517">
    <property type="entry name" value="Transl_elong_EFG/EF2_IV"/>
</dbReference>
<dbReference type="NCBIfam" id="TIGR00484">
    <property type="entry name" value="EF-G"/>
    <property type="match status" value="1"/>
</dbReference>
<dbReference type="NCBIfam" id="NF009381">
    <property type="entry name" value="PRK12740.1-5"/>
    <property type="match status" value="1"/>
</dbReference>
<dbReference type="NCBIfam" id="TIGR00231">
    <property type="entry name" value="small_GTP"/>
    <property type="match status" value="1"/>
</dbReference>
<dbReference type="PANTHER" id="PTHR43261:SF1">
    <property type="entry name" value="RIBOSOME-RELEASING FACTOR 2, MITOCHONDRIAL"/>
    <property type="match status" value="1"/>
</dbReference>
<dbReference type="PANTHER" id="PTHR43261">
    <property type="entry name" value="TRANSLATION ELONGATION FACTOR G-RELATED"/>
    <property type="match status" value="1"/>
</dbReference>
<dbReference type="Pfam" id="PF00679">
    <property type="entry name" value="EFG_C"/>
    <property type="match status" value="1"/>
</dbReference>
<dbReference type="Pfam" id="PF14492">
    <property type="entry name" value="EFG_III"/>
    <property type="match status" value="1"/>
</dbReference>
<dbReference type="Pfam" id="PF03764">
    <property type="entry name" value="EFG_IV"/>
    <property type="match status" value="1"/>
</dbReference>
<dbReference type="Pfam" id="PF00009">
    <property type="entry name" value="GTP_EFTU"/>
    <property type="match status" value="1"/>
</dbReference>
<dbReference type="Pfam" id="PF03144">
    <property type="entry name" value="GTP_EFTU_D2"/>
    <property type="match status" value="1"/>
</dbReference>
<dbReference type="PRINTS" id="PR00315">
    <property type="entry name" value="ELONGATNFCT"/>
</dbReference>
<dbReference type="SMART" id="SM00838">
    <property type="entry name" value="EFG_C"/>
    <property type="match status" value="1"/>
</dbReference>
<dbReference type="SMART" id="SM00889">
    <property type="entry name" value="EFG_IV"/>
    <property type="match status" value="1"/>
</dbReference>
<dbReference type="SUPFAM" id="SSF54980">
    <property type="entry name" value="EF-G C-terminal domain-like"/>
    <property type="match status" value="2"/>
</dbReference>
<dbReference type="SUPFAM" id="SSF52540">
    <property type="entry name" value="P-loop containing nucleoside triphosphate hydrolases"/>
    <property type="match status" value="1"/>
</dbReference>
<dbReference type="SUPFAM" id="SSF54211">
    <property type="entry name" value="Ribosomal protein S5 domain 2-like"/>
    <property type="match status" value="1"/>
</dbReference>
<dbReference type="SUPFAM" id="SSF50447">
    <property type="entry name" value="Translation proteins"/>
    <property type="match status" value="1"/>
</dbReference>
<dbReference type="PROSITE" id="PS00301">
    <property type="entry name" value="G_TR_1"/>
    <property type="match status" value="1"/>
</dbReference>
<dbReference type="PROSITE" id="PS51722">
    <property type="entry name" value="G_TR_2"/>
    <property type="match status" value="1"/>
</dbReference>
<comment type="function">
    <text evidence="1">Catalyzes the GTP-dependent ribosomal translocation step during translation elongation. During this step, the ribosome changes from the pre-translocational (PRE) to the post-translocational (POST) state as the newly formed A-site-bound peptidyl-tRNA and P-site-bound deacylated tRNA move to the P and E sites, respectively. Catalyzes the coordinated movement of the two tRNA molecules, the mRNA and conformational changes in the ribosome.</text>
</comment>
<comment type="subcellular location">
    <subcellularLocation>
        <location evidence="1">Cytoplasm</location>
    </subcellularLocation>
</comment>
<comment type="similarity">
    <text evidence="1">Belongs to the TRAFAC class translation factor GTPase superfamily. Classic translation factor GTPase family. EF-G/EF-2 subfamily.</text>
</comment>
<name>EFG2_BURO1</name>
<accession>Q1BRU5</accession>
<gene>
    <name evidence="1" type="primary">fusA2</name>
    <name type="ordered locus">Bcen_2762</name>
</gene>
<sequence>MARKTPIERYRNIGISAHIDAGKTTTTERILFYTGVNHKIGEVHDGAATMDWMEQEQERGITITSAATTAFWKGMGGNYPEHRINIIDTPGHVDFTIEVERSMRVLDGACMVYCAVGGVQPQSETVWRQANKYKVPRLAFVNKMDRTGANFFKVYDQLRLRLKANPVPVVVPIGAEENFKGVVDLIKMKAIIWDEASQGTKFDYVDIPAELAETCKEWREKMVEVAAEASEDLMNKYLEEGDLPEADIVKALRDRTIACEIQPMLCGTAFKNKGVQRMLDAVIDFLPSPVDIPPVKGELENGEEAERKASDEEKFSSLAFKIMTDPFVGQLIFFRVYSGVVNSGDTLLNSTKGKKERLGRILQMHANQREEIKEVRAGDIAAAVGLKEATTGDTLCDPANPIVLERMVFPEPVISQAVEPKTKADQEKMGLALNRLAQEDPSFRVQTDEESGQTIISGMGELHLEILVDRMKREFGVEATVGKPQVAYRETIRSTAKDVDGKFVKQSGGRGQYGHAVITLEPNEQGKGYEFFDEIKGGVIPREYIPAVDKGIQDTLKSGVLAGFPVVDVKVHLTFGSYHDVDSNENAFRMAGSMAFKEAMRKANPVVLEPMMAVEVETPEDYMGNVMGDLSGRRGIVQGMEDMVGGGKIVRAEVPLSEMFGYSTSLRSLAQGRATYTMEFKHYAEAPRNVAEAIISAKSK</sequence>
<feature type="chain" id="PRO_0000263434" description="Elongation factor G 2">
    <location>
        <begin position="1"/>
        <end position="700"/>
    </location>
</feature>
<feature type="domain" description="tr-type G">
    <location>
        <begin position="8"/>
        <end position="290"/>
    </location>
</feature>
<feature type="binding site" evidence="1">
    <location>
        <begin position="17"/>
        <end position="24"/>
    </location>
    <ligand>
        <name>GTP</name>
        <dbReference type="ChEBI" id="CHEBI:37565"/>
    </ligand>
</feature>
<feature type="binding site" evidence="1">
    <location>
        <begin position="88"/>
        <end position="92"/>
    </location>
    <ligand>
        <name>GTP</name>
        <dbReference type="ChEBI" id="CHEBI:37565"/>
    </ligand>
</feature>
<feature type="binding site" evidence="1">
    <location>
        <begin position="142"/>
        <end position="145"/>
    </location>
    <ligand>
        <name>GTP</name>
        <dbReference type="ChEBI" id="CHEBI:37565"/>
    </ligand>
</feature>
<organism>
    <name type="scientific">Burkholderia orbicola (strain AU 1054)</name>
    <dbReference type="NCBI Taxonomy" id="331271"/>
    <lineage>
        <taxon>Bacteria</taxon>
        <taxon>Pseudomonadati</taxon>
        <taxon>Pseudomonadota</taxon>
        <taxon>Betaproteobacteria</taxon>
        <taxon>Burkholderiales</taxon>
        <taxon>Burkholderiaceae</taxon>
        <taxon>Burkholderia</taxon>
        <taxon>Burkholderia cepacia complex</taxon>
        <taxon>Burkholderia orbicola</taxon>
    </lineage>
</organism>
<keyword id="KW-0963">Cytoplasm</keyword>
<keyword id="KW-0251">Elongation factor</keyword>
<keyword id="KW-0342">GTP-binding</keyword>
<keyword id="KW-0547">Nucleotide-binding</keyword>
<keyword id="KW-0648">Protein biosynthesis</keyword>
<evidence type="ECO:0000255" key="1">
    <source>
        <dbReference type="HAMAP-Rule" id="MF_00054"/>
    </source>
</evidence>